<reference key="1">
    <citation type="submission" date="2007-07" db="EMBL/GenBank/DDBJ databases">
        <title>Complete sequence of Fervidobacterium nodosum Rt17-B1.</title>
        <authorList>
            <consortium name="US DOE Joint Genome Institute"/>
            <person name="Copeland A."/>
            <person name="Lucas S."/>
            <person name="Lapidus A."/>
            <person name="Barry K."/>
            <person name="Glavina del Rio T."/>
            <person name="Dalin E."/>
            <person name="Tice H."/>
            <person name="Pitluck S."/>
            <person name="Saunders E."/>
            <person name="Brettin T."/>
            <person name="Bruce D."/>
            <person name="Detter J.C."/>
            <person name="Han C."/>
            <person name="Schmutz J."/>
            <person name="Larimer F."/>
            <person name="Land M."/>
            <person name="Hauser L."/>
            <person name="Kyrpides N."/>
            <person name="Mikhailova N."/>
            <person name="Nelson K."/>
            <person name="Gogarten J.P."/>
            <person name="Noll K."/>
            <person name="Richardson P."/>
        </authorList>
    </citation>
    <scope>NUCLEOTIDE SEQUENCE [LARGE SCALE GENOMIC DNA]</scope>
    <source>
        <strain>ATCC 35602 / DSM 5306 / Rt17-B1</strain>
    </source>
</reference>
<gene>
    <name evidence="1" type="primary">rplB</name>
    <name type="ordered locus">Fnod_1135</name>
</gene>
<sequence length="275" mass="30459">MGLKRFKPTTPGRRFMIIPDFSEITKTKPEKSLVVPLKKSAGRNHHGRVTVRFRGGGHKRLYRIVDFRRWEKENIPAKVASIEYDPNRTARIALLIYADGEKRYILAPNGLNVGDTVMSGPEAEIKPGNALPLENIPVGTIVHSIEFLPRGGAKIARSAGVACQLMAKEGNYALLKMPSGELRKVHIKCYATVGVVGNEDHKNEVSGKAGRERWKGRKPHVRGVVMNPVDHPHGGGEGRGKGHHPQSPWGVPAKGYKTRRGKRASDKFIVRRRNG</sequence>
<organism>
    <name type="scientific">Fervidobacterium nodosum (strain ATCC 35602 / DSM 5306 / Rt17-B1)</name>
    <dbReference type="NCBI Taxonomy" id="381764"/>
    <lineage>
        <taxon>Bacteria</taxon>
        <taxon>Thermotogati</taxon>
        <taxon>Thermotogota</taxon>
        <taxon>Thermotogae</taxon>
        <taxon>Thermotogales</taxon>
        <taxon>Fervidobacteriaceae</taxon>
        <taxon>Fervidobacterium</taxon>
    </lineage>
</organism>
<proteinExistence type="inferred from homology"/>
<comment type="function">
    <text evidence="1">One of the primary rRNA binding proteins. Required for association of the 30S and 50S subunits to form the 70S ribosome, for tRNA binding and peptide bond formation. It has been suggested to have peptidyltransferase activity; this is somewhat controversial. Makes several contacts with the 16S rRNA in the 70S ribosome.</text>
</comment>
<comment type="subunit">
    <text evidence="1">Part of the 50S ribosomal subunit. Forms a bridge to the 30S subunit in the 70S ribosome.</text>
</comment>
<comment type="similarity">
    <text evidence="1">Belongs to the universal ribosomal protein uL2 family.</text>
</comment>
<protein>
    <recommendedName>
        <fullName evidence="1">Large ribosomal subunit protein uL2</fullName>
    </recommendedName>
    <alternativeName>
        <fullName evidence="3">50S ribosomal protein L2</fullName>
    </alternativeName>
</protein>
<keyword id="KW-1185">Reference proteome</keyword>
<keyword id="KW-0687">Ribonucleoprotein</keyword>
<keyword id="KW-0689">Ribosomal protein</keyword>
<keyword id="KW-0694">RNA-binding</keyword>
<keyword id="KW-0699">rRNA-binding</keyword>
<dbReference type="EMBL" id="CP000771">
    <property type="protein sequence ID" value="ABS60982.1"/>
    <property type="molecule type" value="Genomic_DNA"/>
</dbReference>
<dbReference type="RefSeq" id="WP_011994295.1">
    <property type="nucleotide sequence ID" value="NC_009718.1"/>
</dbReference>
<dbReference type="SMR" id="A7HM49"/>
<dbReference type="STRING" id="381764.Fnod_1135"/>
<dbReference type="KEGG" id="fno:Fnod_1135"/>
<dbReference type="eggNOG" id="COG0090">
    <property type="taxonomic scope" value="Bacteria"/>
</dbReference>
<dbReference type="HOGENOM" id="CLU_036235_2_1_0"/>
<dbReference type="OrthoDB" id="9778722at2"/>
<dbReference type="Proteomes" id="UP000002415">
    <property type="component" value="Chromosome"/>
</dbReference>
<dbReference type="GO" id="GO:0015934">
    <property type="term" value="C:large ribosomal subunit"/>
    <property type="evidence" value="ECO:0007669"/>
    <property type="project" value="InterPro"/>
</dbReference>
<dbReference type="GO" id="GO:0019843">
    <property type="term" value="F:rRNA binding"/>
    <property type="evidence" value="ECO:0007669"/>
    <property type="project" value="UniProtKB-UniRule"/>
</dbReference>
<dbReference type="GO" id="GO:0003735">
    <property type="term" value="F:structural constituent of ribosome"/>
    <property type="evidence" value="ECO:0007669"/>
    <property type="project" value="InterPro"/>
</dbReference>
<dbReference type="GO" id="GO:0016740">
    <property type="term" value="F:transferase activity"/>
    <property type="evidence" value="ECO:0007669"/>
    <property type="project" value="InterPro"/>
</dbReference>
<dbReference type="GO" id="GO:0002181">
    <property type="term" value="P:cytoplasmic translation"/>
    <property type="evidence" value="ECO:0007669"/>
    <property type="project" value="TreeGrafter"/>
</dbReference>
<dbReference type="FunFam" id="2.30.30.30:FF:000001">
    <property type="entry name" value="50S ribosomal protein L2"/>
    <property type="match status" value="1"/>
</dbReference>
<dbReference type="FunFam" id="2.40.50.140:FF:000003">
    <property type="entry name" value="50S ribosomal protein L2"/>
    <property type="match status" value="1"/>
</dbReference>
<dbReference type="FunFam" id="4.10.950.10:FF:000001">
    <property type="entry name" value="50S ribosomal protein L2"/>
    <property type="match status" value="1"/>
</dbReference>
<dbReference type="Gene3D" id="2.30.30.30">
    <property type="match status" value="1"/>
</dbReference>
<dbReference type="Gene3D" id="2.40.50.140">
    <property type="entry name" value="Nucleic acid-binding proteins"/>
    <property type="match status" value="1"/>
</dbReference>
<dbReference type="Gene3D" id="4.10.950.10">
    <property type="entry name" value="Ribosomal protein L2, domain 3"/>
    <property type="match status" value="1"/>
</dbReference>
<dbReference type="HAMAP" id="MF_01320_B">
    <property type="entry name" value="Ribosomal_uL2_B"/>
    <property type="match status" value="1"/>
</dbReference>
<dbReference type="InterPro" id="IPR012340">
    <property type="entry name" value="NA-bd_OB-fold"/>
</dbReference>
<dbReference type="InterPro" id="IPR014722">
    <property type="entry name" value="Rib_uL2_dom2"/>
</dbReference>
<dbReference type="InterPro" id="IPR002171">
    <property type="entry name" value="Ribosomal_uL2"/>
</dbReference>
<dbReference type="InterPro" id="IPR005880">
    <property type="entry name" value="Ribosomal_uL2_bac/org-type"/>
</dbReference>
<dbReference type="InterPro" id="IPR022669">
    <property type="entry name" value="Ribosomal_uL2_C"/>
</dbReference>
<dbReference type="InterPro" id="IPR022671">
    <property type="entry name" value="Ribosomal_uL2_CS"/>
</dbReference>
<dbReference type="InterPro" id="IPR014726">
    <property type="entry name" value="Ribosomal_uL2_dom3"/>
</dbReference>
<dbReference type="InterPro" id="IPR022666">
    <property type="entry name" value="Ribosomal_uL2_RNA-bd_dom"/>
</dbReference>
<dbReference type="InterPro" id="IPR008991">
    <property type="entry name" value="Translation_prot_SH3-like_sf"/>
</dbReference>
<dbReference type="NCBIfam" id="TIGR01171">
    <property type="entry name" value="rplB_bact"/>
    <property type="match status" value="1"/>
</dbReference>
<dbReference type="PANTHER" id="PTHR13691:SF5">
    <property type="entry name" value="LARGE RIBOSOMAL SUBUNIT PROTEIN UL2M"/>
    <property type="match status" value="1"/>
</dbReference>
<dbReference type="PANTHER" id="PTHR13691">
    <property type="entry name" value="RIBOSOMAL PROTEIN L2"/>
    <property type="match status" value="1"/>
</dbReference>
<dbReference type="Pfam" id="PF00181">
    <property type="entry name" value="Ribosomal_L2"/>
    <property type="match status" value="1"/>
</dbReference>
<dbReference type="Pfam" id="PF03947">
    <property type="entry name" value="Ribosomal_L2_C"/>
    <property type="match status" value="1"/>
</dbReference>
<dbReference type="PIRSF" id="PIRSF002158">
    <property type="entry name" value="Ribosomal_L2"/>
    <property type="match status" value="1"/>
</dbReference>
<dbReference type="SMART" id="SM01383">
    <property type="entry name" value="Ribosomal_L2"/>
    <property type="match status" value="1"/>
</dbReference>
<dbReference type="SMART" id="SM01382">
    <property type="entry name" value="Ribosomal_L2_C"/>
    <property type="match status" value="1"/>
</dbReference>
<dbReference type="SUPFAM" id="SSF50249">
    <property type="entry name" value="Nucleic acid-binding proteins"/>
    <property type="match status" value="1"/>
</dbReference>
<dbReference type="SUPFAM" id="SSF50104">
    <property type="entry name" value="Translation proteins SH3-like domain"/>
    <property type="match status" value="1"/>
</dbReference>
<dbReference type="PROSITE" id="PS00467">
    <property type="entry name" value="RIBOSOMAL_L2"/>
    <property type="match status" value="1"/>
</dbReference>
<evidence type="ECO:0000255" key="1">
    <source>
        <dbReference type="HAMAP-Rule" id="MF_01320"/>
    </source>
</evidence>
<evidence type="ECO:0000256" key="2">
    <source>
        <dbReference type="SAM" id="MobiDB-lite"/>
    </source>
</evidence>
<evidence type="ECO:0000305" key="3"/>
<feature type="chain" id="PRO_1000073229" description="Large ribosomal subunit protein uL2">
    <location>
        <begin position="1"/>
        <end position="275"/>
    </location>
</feature>
<feature type="region of interest" description="Disordered" evidence="2">
    <location>
        <begin position="223"/>
        <end position="275"/>
    </location>
</feature>
<feature type="compositionally biased region" description="Basic and acidic residues" evidence="2">
    <location>
        <begin position="230"/>
        <end position="240"/>
    </location>
</feature>
<accession>A7HM49</accession>
<name>RL2_FERNB</name>